<sequence length="147" mass="16621">MPRHSVFALSILALSITATVWIPTVQAETNLLRREFYGPVNPELFAAFLDDHDARGRENQRDFSSGSGTNELVDELSPVSERETLERFGKRNIDEIDRTAFDNFFKRNLDEIDRVGWSGFVKRLTNYLATTGHGTNTGGPVLTRRFG</sequence>
<evidence type="ECO:0000250" key="1">
    <source>
        <dbReference type="UniProtKB" id="Q9NL83"/>
    </source>
</evidence>
<evidence type="ECO:0000255" key="2"/>
<evidence type="ECO:0000269" key="3">
    <source>
    </source>
</evidence>
<evidence type="ECO:0000305" key="4"/>
<comment type="function">
    <text evidence="1">Myotropic peptides.</text>
</comment>
<comment type="subcellular location">
    <subcellularLocation>
        <location evidence="1">Secreted</location>
    </subcellularLocation>
</comment>
<comment type="mass spectrometry" mass="1715.78" method="Electrospray" evidence="3">
    <molecule>Orcokinin-like peptide-1</molecule>
</comment>
<comment type="mass spectrometry" mass="1601.74" method="Electrospray" evidence="3">
    <molecule>Orcokinin-like peptide-2</molecule>
</comment>
<comment type="mass spectrometry" mass="1373.63" method="Electrospray" evidence="3">
    <molecule>Orcokinin-like peptide-3</molecule>
</comment>
<comment type="mass spectrometry" mass="1605.79" method="Electrospray" evidence="3">
    <molecule>Brain peptide NLDEIDRVGWSGFV</molecule>
</comment>
<comment type="mass spectrometry" mass="1987.0" method="Electrospray" evidence="3">
    <molecule>Brain peptide LTNYLATTGHGTNTGGPVLT</molecule>
</comment>
<comment type="similarity">
    <text evidence="4">Belongs to the orcokinin family.</text>
</comment>
<reference evidence="4" key="1">
    <citation type="submission" date="2010-11" db="EMBL/GenBank/DDBJ databases">
        <authorList>
            <consortium name="Honey bee genome project"/>
            <person name="Zhang L."/>
            <person name="Deng J."/>
            <person name="Wu Y.-Q."/>
            <person name="Kovar C."/>
            <person name="Aqrawi P."/>
            <person name="Bandaranaike D."/>
            <person name="Blankenburg K."/>
            <person name="Chen D."/>
            <person name="Denson S."/>
            <person name="Dinh H."/>
            <person name="Firestine M."/>
            <person name="Gross S."/>
            <person name="Han Y."/>
            <person name="Hernandez B."/>
            <person name="Holder M."/>
            <person name="Jackson L."/>
            <person name="Javaid M."/>
            <person name="Jing C."/>
            <person name="Jones J."/>
            <person name="Joshi V."/>
            <person name="Kamau G."/>
            <person name="Korchina V."/>
            <person name="Lee S."/>
            <person name="Lorensuhewa L."/>
            <person name="Mata R."/>
            <person name="Mathew T."/>
            <person name="Mims S."/>
            <person name="Ngo R."/>
            <person name="Nguyen L."/>
            <person name="Okwuonu G."/>
            <person name="Ongeri F."/>
            <person name="Osuji N."/>
            <person name="Pham C."/>
            <person name="Puazo M."/>
            <person name="Qu C."/>
            <person name="Quiroz J."/>
            <person name="Raj R."/>
            <person name="Rio Deiros D."/>
            <person name="Santibanez J."/>
            <person name="Scheel M."/>
            <person name="Scherer S."/>
            <person name="Vee V."/>
            <person name="Wang M."/>
            <person name="Xin Y."/>
            <person name="Richards S."/>
            <person name="Reid J.G."/>
            <person name="Newsham I."/>
            <person name="Worley K.C."/>
            <person name="Muzny D.M."/>
            <person name="Gibbs R."/>
        </authorList>
    </citation>
    <scope>NUCLEOTIDE SEQUENCE [LARGE SCALE GENOMIC DNA]</scope>
    <source>
        <strain>DH4</strain>
    </source>
</reference>
<reference evidence="4" key="2">
    <citation type="journal article" date="2006" name="Science">
        <title>From the genome to the proteome: uncovering peptides in the Apis brain.</title>
        <authorList>
            <person name="Hummon A.B."/>
            <person name="Richmond T.A."/>
            <person name="Verleyen P."/>
            <person name="Baggerman G."/>
            <person name="Huybrechts J."/>
            <person name="Ewing M.A."/>
            <person name="Vierstraete E."/>
            <person name="Rodriguez-Zas S.L."/>
            <person name="Schoofs L."/>
            <person name="Robinson G.E."/>
            <person name="Sweedler J.V."/>
        </authorList>
    </citation>
    <scope>PROTEIN SEQUENCE OF 92-105; 108-121 AND 124-143</scope>
    <scope>MASS SPECTROMETRY</scope>
    <source>
        <tissue evidence="3">Brain</tissue>
    </source>
</reference>
<accession>P85832</accession>
<protein>
    <recommendedName>
        <fullName>Orcokinin peptides</fullName>
    </recommendedName>
    <component>
        <recommendedName>
            <fullName>Orcokinin-like peptide-1</fullName>
        </recommendedName>
        <alternativeName>
            <fullName>Brain peptide NIDEIDRTAFDNFF</fullName>
        </alternativeName>
    </component>
    <component>
        <recommendedName>
            <fullName>Orcokinin-like peptide-2</fullName>
        </recommendedName>
        <alternativeName>
            <fullName>Brain peptide IDEIDRTAFDNFF</fullName>
        </alternativeName>
    </component>
    <component>
        <recommendedName>
            <fullName>Orcokinin-like peptide-3</fullName>
        </recommendedName>
        <alternativeName>
            <fullName>Brain peptide EIDRTAFDNFF</fullName>
        </alternativeName>
    </component>
    <component>
        <recommendedName>
            <fullName>Brain peptide NLDEIDRVGWSGFV</fullName>
        </recommendedName>
    </component>
    <component>
        <recommendedName>
            <fullName>Brain peptide LTNYLATTGHGTNTGGPVLT</fullName>
        </recommendedName>
    </component>
</protein>
<proteinExistence type="evidence at protein level"/>
<name>ORCK1_APIME</name>
<dbReference type="EMBL" id="AADG06001921">
    <property type="status" value="NOT_ANNOTATED_CDS"/>
    <property type="molecule type" value="Genomic_DNA"/>
</dbReference>
<dbReference type="STRING" id="7460.P85832"/>
<dbReference type="EnsemblMetazoa" id="NM_001278325">
    <property type="protein sequence ID" value="NP_001265254"/>
    <property type="gene ID" value="LOC726294"/>
</dbReference>
<dbReference type="eggNOG" id="ENOG502RTRH">
    <property type="taxonomic scope" value="Eukaryota"/>
</dbReference>
<dbReference type="InParanoid" id="P85832"/>
<dbReference type="Proteomes" id="UP000005203">
    <property type="component" value="Unplaced"/>
</dbReference>
<dbReference type="GO" id="GO:0005576">
    <property type="term" value="C:extracellular region"/>
    <property type="evidence" value="ECO:0007669"/>
    <property type="project" value="UniProtKB-SubCell"/>
</dbReference>
<dbReference type="GO" id="GO:0007218">
    <property type="term" value="P:neuropeptide signaling pathway"/>
    <property type="evidence" value="ECO:0007669"/>
    <property type="project" value="UniProtKB-KW"/>
</dbReference>
<organism>
    <name type="scientific">Apis mellifera</name>
    <name type="common">Honeybee</name>
    <dbReference type="NCBI Taxonomy" id="7460"/>
    <lineage>
        <taxon>Eukaryota</taxon>
        <taxon>Metazoa</taxon>
        <taxon>Ecdysozoa</taxon>
        <taxon>Arthropoda</taxon>
        <taxon>Hexapoda</taxon>
        <taxon>Insecta</taxon>
        <taxon>Pterygota</taxon>
        <taxon>Neoptera</taxon>
        <taxon>Endopterygota</taxon>
        <taxon>Hymenoptera</taxon>
        <taxon>Apocrita</taxon>
        <taxon>Aculeata</taxon>
        <taxon>Apoidea</taxon>
        <taxon>Anthophila</taxon>
        <taxon>Apidae</taxon>
        <taxon>Apis</taxon>
    </lineage>
</organism>
<keyword id="KW-0165">Cleavage on pair of basic residues</keyword>
<keyword id="KW-0903">Direct protein sequencing</keyword>
<keyword id="KW-0527">Neuropeptide</keyword>
<keyword id="KW-1185">Reference proteome</keyword>
<keyword id="KW-0964">Secreted</keyword>
<keyword id="KW-0732">Signal</keyword>
<feature type="signal peptide" evidence="2">
    <location>
        <begin position="1"/>
        <end position="27"/>
    </location>
</feature>
<feature type="propeptide" id="PRO_0000339276" evidence="3">
    <location>
        <begin position="28"/>
        <end position="89"/>
    </location>
</feature>
<feature type="peptide" id="PRO_0000339277" description="Orcokinin-like peptide-1" evidence="3">
    <location>
        <begin position="92"/>
        <end position="105"/>
    </location>
</feature>
<feature type="peptide" id="PRO_0000339278" description="Orcokinin-like peptide-2" evidence="3">
    <location>
        <begin position="93"/>
        <end position="105"/>
    </location>
</feature>
<feature type="peptide" id="PRO_0000339279" description="Orcokinin-like peptide-3" evidence="3">
    <location>
        <begin position="95"/>
        <end position="105"/>
    </location>
</feature>
<feature type="peptide" id="PRO_0000339280" description="Brain peptide NLDEIDRVGWSGFV">
    <location>
        <begin position="108"/>
        <end position="121"/>
    </location>
</feature>
<feature type="peptide" id="PRO_0000339281" description="Brain peptide LTNYLATTGHGTNTGGPVLT">
    <location>
        <begin position="124"/>
        <end position="143"/>
    </location>
</feature>
<feature type="propeptide" id="PRO_0000339282" evidence="3">
    <location>
        <begin position="146"/>
        <end position="147"/>
    </location>
</feature>